<organism>
    <name type="scientific">Dictyostelium discoideum</name>
    <name type="common">Social amoeba</name>
    <dbReference type="NCBI Taxonomy" id="44689"/>
    <lineage>
        <taxon>Eukaryota</taxon>
        <taxon>Amoebozoa</taxon>
        <taxon>Evosea</taxon>
        <taxon>Eumycetozoa</taxon>
        <taxon>Dictyostelia</taxon>
        <taxon>Dictyosteliales</taxon>
        <taxon>Dictyosteliaceae</taxon>
        <taxon>Dictyostelium</taxon>
    </lineage>
</organism>
<proteinExistence type="inferred from homology"/>
<gene>
    <name type="ORF">DDB_G0280131</name>
</gene>
<name>Y0038_DICDI</name>
<comment type="domain">
    <text>The protein kinase domain is predicted to be catalytically inactive.</text>
</comment>
<comment type="similarity">
    <text evidence="3">Belongs to the protein kinase superfamily. TKL Ser/Thr protein kinase family.</text>
</comment>
<accession>Q54VU5</accession>
<dbReference type="EMBL" id="AAFI02000035">
    <property type="protein sequence ID" value="EAL67292.1"/>
    <property type="molecule type" value="Genomic_DNA"/>
</dbReference>
<dbReference type="RefSeq" id="XP_641260.1">
    <property type="nucleotide sequence ID" value="XM_636168.1"/>
</dbReference>
<dbReference type="SMR" id="Q54VU5"/>
<dbReference type="FunCoup" id="Q54VU5">
    <property type="interactions" value="465"/>
</dbReference>
<dbReference type="GlyGen" id="Q54VU5">
    <property type="glycosylation" value="1 site"/>
</dbReference>
<dbReference type="PaxDb" id="44689-DDB0230038"/>
<dbReference type="EnsemblProtists" id="EAL67292">
    <property type="protein sequence ID" value="EAL67292"/>
    <property type="gene ID" value="DDB_G0280131"/>
</dbReference>
<dbReference type="GeneID" id="8622392"/>
<dbReference type="KEGG" id="ddi:DDB_G0280131"/>
<dbReference type="dictyBase" id="DDB_G0280131"/>
<dbReference type="VEuPathDB" id="AmoebaDB:DDB_G0280131"/>
<dbReference type="eggNOG" id="ENOG502RSQH">
    <property type="taxonomic scope" value="Eukaryota"/>
</dbReference>
<dbReference type="HOGENOM" id="CLU_271739_0_0_1"/>
<dbReference type="InParanoid" id="Q54VU5"/>
<dbReference type="OMA" id="LWEMFAR"/>
<dbReference type="PRO" id="PR:Q54VU5"/>
<dbReference type="Proteomes" id="UP000002195">
    <property type="component" value="Chromosome 3"/>
</dbReference>
<dbReference type="GO" id="GO:0005737">
    <property type="term" value="C:cytoplasm"/>
    <property type="evidence" value="ECO:0000318"/>
    <property type="project" value="GO_Central"/>
</dbReference>
<dbReference type="GO" id="GO:0005524">
    <property type="term" value="F:ATP binding"/>
    <property type="evidence" value="ECO:0007669"/>
    <property type="project" value="UniProtKB-KW"/>
</dbReference>
<dbReference type="GO" id="GO:0004672">
    <property type="term" value="F:protein kinase activity"/>
    <property type="evidence" value="ECO:0000318"/>
    <property type="project" value="GO_Central"/>
</dbReference>
<dbReference type="GO" id="GO:0007165">
    <property type="term" value="P:signal transduction"/>
    <property type="evidence" value="ECO:0000318"/>
    <property type="project" value="GO_Central"/>
</dbReference>
<dbReference type="Gene3D" id="1.25.10.10">
    <property type="entry name" value="Leucine-rich Repeat Variant"/>
    <property type="match status" value="2"/>
</dbReference>
<dbReference type="Gene3D" id="1.10.510.10">
    <property type="entry name" value="Transferase(Phosphotransferase) domain 1"/>
    <property type="match status" value="1"/>
</dbReference>
<dbReference type="InterPro" id="IPR011989">
    <property type="entry name" value="ARM-like"/>
</dbReference>
<dbReference type="InterPro" id="IPR016024">
    <property type="entry name" value="ARM-type_fold"/>
</dbReference>
<dbReference type="InterPro" id="IPR000225">
    <property type="entry name" value="Armadillo"/>
</dbReference>
<dbReference type="InterPro" id="IPR011009">
    <property type="entry name" value="Kinase-like_dom_sf"/>
</dbReference>
<dbReference type="InterPro" id="IPR000719">
    <property type="entry name" value="Prot_kinase_dom"/>
</dbReference>
<dbReference type="InterPro" id="IPR017441">
    <property type="entry name" value="Protein_kinase_ATP_BS"/>
</dbReference>
<dbReference type="InterPro" id="IPR001245">
    <property type="entry name" value="Ser-Thr/Tyr_kinase_cat_dom"/>
</dbReference>
<dbReference type="InterPro" id="IPR051681">
    <property type="entry name" value="Ser/Thr_Kinases-Pseudokinases"/>
</dbReference>
<dbReference type="PANTHER" id="PTHR44329">
    <property type="entry name" value="SERINE/THREONINE-PROTEIN KINASE TNNI3K-RELATED"/>
    <property type="match status" value="1"/>
</dbReference>
<dbReference type="Pfam" id="PF00514">
    <property type="entry name" value="Arm"/>
    <property type="match status" value="1"/>
</dbReference>
<dbReference type="Pfam" id="PF07714">
    <property type="entry name" value="PK_Tyr_Ser-Thr"/>
    <property type="match status" value="1"/>
</dbReference>
<dbReference type="SMART" id="SM00185">
    <property type="entry name" value="ARM"/>
    <property type="match status" value="3"/>
</dbReference>
<dbReference type="SUPFAM" id="SSF48371">
    <property type="entry name" value="ARM repeat"/>
    <property type="match status" value="1"/>
</dbReference>
<dbReference type="SUPFAM" id="SSF56112">
    <property type="entry name" value="Protein kinase-like (PK-like)"/>
    <property type="match status" value="1"/>
</dbReference>
<dbReference type="PROSITE" id="PS00107">
    <property type="entry name" value="PROTEIN_KINASE_ATP"/>
    <property type="match status" value="1"/>
</dbReference>
<dbReference type="PROSITE" id="PS50011">
    <property type="entry name" value="PROTEIN_KINASE_DOM"/>
    <property type="match status" value="1"/>
</dbReference>
<evidence type="ECO:0000255" key="1">
    <source>
        <dbReference type="PROSITE-ProRule" id="PRU00159"/>
    </source>
</evidence>
<evidence type="ECO:0000256" key="2">
    <source>
        <dbReference type="SAM" id="MobiDB-lite"/>
    </source>
</evidence>
<evidence type="ECO:0000305" key="3"/>
<reference key="1">
    <citation type="journal article" date="2005" name="Nature">
        <title>The genome of the social amoeba Dictyostelium discoideum.</title>
        <authorList>
            <person name="Eichinger L."/>
            <person name="Pachebat J.A."/>
            <person name="Gloeckner G."/>
            <person name="Rajandream M.A."/>
            <person name="Sucgang R."/>
            <person name="Berriman M."/>
            <person name="Song J."/>
            <person name="Olsen R."/>
            <person name="Szafranski K."/>
            <person name="Xu Q."/>
            <person name="Tunggal B."/>
            <person name="Kummerfeld S."/>
            <person name="Madera M."/>
            <person name="Konfortov B.A."/>
            <person name="Rivero F."/>
            <person name="Bankier A.T."/>
            <person name="Lehmann R."/>
            <person name="Hamlin N."/>
            <person name="Davies R."/>
            <person name="Gaudet P."/>
            <person name="Fey P."/>
            <person name="Pilcher K."/>
            <person name="Chen G."/>
            <person name="Saunders D."/>
            <person name="Sodergren E.J."/>
            <person name="Davis P."/>
            <person name="Kerhornou A."/>
            <person name="Nie X."/>
            <person name="Hall N."/>
            <person name="Anjard C."/>
            <person name="Hemphill L."/>
            <person name="Bason N."/>
            <person name="Farbrother P."/>
            <person name="Desany B."/>
            <person name="Just E."/>
            <person name="Morio T."/>
            <person name="Rost R."/>
            <person name="Churcher C.M."/>
            <person name="Cooper J."/>
            <person name="Haydock S."/>
            <person name="van Driessche N."/>
            <person name="Cronin A."/>
            <person name="Goodhead I."/>
            <person name="Muzny D.M."/>
            <person name="Mourier T."/>
            <person name="Pain A."/>
            <person name="Lu M."/>
            <person name="Harper D."/>
            <person name="Lindsay R."/>
            <person name="Hauser H."/>
            <person name="James K.D."/>
            <person name="Quiles M."/>
            <person name="Madan Babu M."/>
            <person name="Saito T."/>
            <person name="Buchrieser C."/>
            <person name="Wardroper A."/>
            <person name="Felder M."/>
            <person name="Thangavelu M."/>
            <person name="Johnson D."/>
            <person name="Knights A."/>
            <person name="Loulseged H."/>
            <person name="Mungall K.L."/>
            <person name="Oliver K."/>
            <person name="Price C."/>
            <person name="Quail M.A."/>
            <person name="Urushihara H."/>
            <person name="Hernandez J."/>
            <person name="Rabbinowitsch E."/>
            <person name="Steffen D."/>
            <person name="Sanders M."/>
            <person name="Ma J."/>
            <person name="Kohara Y."/>
            <person name="Sharp S."/>
            <person name="Simmonds M.N."/>
            <person name="Spiegler S."/>
            <person name="Tivey A."/>
            <person name="Sugano S."/>
            <person name="White B."/>
            <person name="Walker D."/>
            <person name="Woodward J.R."/>
            <person name="Winckler T."/>
            <person name="Tanaka Y."/>
            <person name="Shaulsky G."/>
            <person name="Schleicher M."/>
            <person name="Weinstock G.M."/>
            <person name="Rosenthal A."/>
            <person name="Cox E.C."/>
            <person name="Chisholm R.L."/>
            <person name="Gibbs R.A."/>
            <person name="Loomis W.F."/>
            <person name="Platzer M."/>
            <person name="Kay R.R."/>
            <person name="Williams J.G."/>
            <person name="Dear P.H."/>
            <person name="Noegel A.A."/>
            <person name="Barrell B.G."/>
            <person name="Kuspa A."/>
        </authorList>
    </citation>
    <scope>NUCLEOTIDE SEQUENCE [LARGE SCALE GENOMIC DNA]</scope>
    <source>
        <strain>AX4</strain>
    </source>
</reference>
<sequence length="1192" mass="132491">MSELDDLLNEMLAESEAALNGQSTINLNNNNSNNNNNNNNNGNSATKISFQEQMPNGNGNSSTTTTTAAQQSATEKRKSRLSQHPSNLNEGGFDYLDTLLNDMSDESIRNSIKTDNSRIKSLRLTSTFDLESTLKDLEETFMKDSSIQNKRKPSSYLSKNLSPPSNPSNIISNNNASTLPLPPPPSQQDDVVIIAKLPPPVSISLPPPPTTEELPLPPPSTEELQLPPPPPTTTTADEQILTDSVKNGNPILKRVSSERAIILTKEAIDAADLLDEMIESFGGIPEPNGNNSLPKEIKTTSIPTPIVTPSTTTSTNTTTAATVNKLNASKSPNGTLTTRPAAKLGAPVDIQVSSPKAPTPIPTLSSPSPSQSAAPQPAAPQPTPTSQPQPPTTTVSTPVSPTFKDSDQLLDDMISHFKESNSNLLTSSSNLDPSAPKVVYTSQQFYPLSVEEQSLQSKVKVQLTPDEQVIQKILGNNDLDDDITNKNNDNNSNGNNNNKELIDEQNQIEQQQSDKSWYIKAQPSDIIGSGNNGTTQRAGIHKDKRIVMKQWNFITSQATPMLFNEIEQLVAIKHPNILALAGASFDNQTFTTFTEYITGSNLDIVIKNLDEKNELQLILRLSEEIASAMSFLHSFNIVHRSLHPKNILLNSDLKIYIKDYGFTSLKDETLKKKFMSFQLKNQLLHTQYLAPELFNVLSGSKGGYDTKVDVFSFGVLLWEMFARDIKLSDLKSNTVNGYTHYLRPPLPNCPFTIEKLIKLCLSTDPSVRPTFTTILKILRQPLHTIQRFNKPTQQQQQQQQQDQQQQQPEQQLTSSTSSTSTQDSLVSQEQVEEKIKNEMNNLLNPNKRFNESLDPEKRVKIEKIANVVKDLISQPTLLNLHRASQTIDQLCKNVENIEYLLEADFVPLIFQLMDQPYDEIQLSCLKQFSTLIEHNEEIMNLFRNLLGINILMETLNSQKENILFITLRLLSQLSNGADREENREQILIKGGIPLLINLLSHQNELIRLQILWCLTLLLESNSVQVEFVKLGGVNQLLDMMVHSINSGFDLRVASALARVISLKSVQDQINLGHYRERVVKKYLSLLGDTQFEALRMLGLEAIACLVSNKDSQFILTASNIVDLLLSYLDPNSTSMAPQMTALKIILVLSVNPIHIPYLKSSNIIEPLQYLKSSPHPSIQKAVEKILMLVSSK</sequence>
<keyword id="KW-0067">ATP-binding</keyword>
<keyword id="KW-0547">Nucleotide-binding</keyword>
<keyword id="KW-1185">Reference proteome</keyword>
<protein>
    <recommendedName>
        <fullName>Probable inactive serine/threonine-protein kinase DDB_G0280131</fullName>
    </recommendedName>
</protein>
<feature type="chain" id="PRO_0000355171" description="Probable inactive serine/threonine-protein kinase DDB_G0280131">
    <location>
        <begin position="1"/>
        <end position="1192"/>
    </location>
</feature>
<feature type="domain" description="Protein kinase" evidence="1">
    <location>
        <begin position="521"/>
        <end position="783"/>
    </location>
</feature>
<feature type="region of interest" description="Disordered" evidence="2">
    <location>
        <begin position="23"/>
        <end position="90"/>
    </location>
</feature>
<feature type="region of interest" description="Disordered" evidence="2">
    <location>
        <begin position="144"/>
        <end position="189"/>
    </location>
</feature>
<feature type="region of interest" description="Disordered" evidence="2">
    <location>
        <begin position="201"/>
        <end position="236"/>
    </location>
</feature>
<feature type="region of interest" description="Disordered" evidence="2">
    <location>
        <begin position="301"/>
        <end position="406"/>
    </location>
</feature>
<feature type="region of interest" description="Disordered" evidence="2">
    <location>
        <begin position="478"/>
        <end position="499"/>
    </location>
</feature>
<feature type="region of interest" description="Disordered" evidence="2">
    <location>
        <begin position="790"/>
        <end position="831"/>
    </location>
</feature>
<feature type="compositionally biased region" description="Low complexity" evidence="2">
    <location>
        <begin position="26"/>
        <end position="43"/>
    </location>
</feature>
<feature type="compositionally biased region" description="Polar residues" evidence="2">
    <location>
        <begin position="44"/>
        <end position="60"/>
    </location>
</feature>
<feature type="compositionally biased region" description="Low complexity" evidence="2">
    <location>
        <begin position="61"/>
        <end position="73"/>
    </location>
</feature>
<feature type="compositionally biased region" description="Low complexity" evidence="2">
    <location>
        <begin position="154"/>
        <end position="175"/>
    </location>
</feature>
<feature type="compositionally biased region" description="Pro residues" evidence="2">
    <location>
        <begin position="201"/>
        <end position="232"/>
    </location>
</feature>
<feature type="compositionally biased region" description="Low complexity" evidence="2">
    <location>
        <begin position="301"/>
        <end position="324"/>
    </location>
</feature>
<feature type="compositionally biased region" description="Polar residues" evidence="2">
    <location>
        <begin position="325"/>
        <end position="338"/>
    </location>
</feature>
<feature type="compositionally biased region" description="Low complexity" evidence="2">
    <location>
        <begin position="362"/>
        <end position="376"/>
    </location>
</feature>
<feature type="compositionally biased region" description="Pro residues" evidence="2">
    <location>
        <begin position="377"/>
        <end position="391"/>
    </location>
</feature>
<feature type="compositionally biased region" description="Low complexity" evidence="2">
    <location>
        <begin position="392"/>
        <end position="402"/>
    </location>
</feature>
<feature type="compositionally biased region" description="Low complexity" evidence="2">
    <location>
        <begin position="485"/>
        <end position="498"/>
    </location>
</feature>
<feature type="compositionally biased region" description="Low complexity" evidence="2">
    <location>
        <begin position="791"/>
        <end position="828"/>
    </location>
</feature>
<feature type="binding site" evidence="1">
    <location>
        <begin position="527"/>
        <end position="535"/>
    </location>
    <ligand>
        <name>ATP</name>
        <dbReference type="ChEBI" id="CHEBI:30616"/>
    </ligand>
</feature>
<feature type="binding site" evidence="1">
    <location>
        <position position="549"/>
    </location>
    <ligand>
        <name>ATP</name>
        <dbReference type="ChEBI" id="CHEBI:30616"/>
    </ligand>
</feature>